<comment type="cofactor">
    <cofactor evidence="1">
        <name>Zn(2+)</name>
        <dbReference type="ChEBI" id="CHEBI:29105"/>
    </cofactor>
    <text evidence="1">Binds 3 Zn(2+) ions per subunit.</text>
</comment>
<comment type="subunit">
    <text evidence="1">Homotrimer.</text>
</comment>
<comment type="similarity">
    <text evidence="1">Belongs to the PHP family.</text>
</comment>
<protein>
    <recommendedName>
        <fullName evidence="1">Probable phosphatase PMI1003</fullName>
        <ecNumber evidence="1">3.1.3.-</ecNumber>
    </recommendedName>
</protein>
<dbReference type="EC" id="3.1.3.-" evidence="1"/>
<dbReference type="EMBL" id="AM942759">
    <property type="protein sequence ID" value="CAR42199.1"/>
    <property type="molecule type" value="Genomic_DNA"/>
</dbReference>
<dbReference type="RefSeq" id="WP_012367826.1">
    <property type="nucleotide sequence ID" value="NC_010554.1"/>
</dbReference>
<dbReference type="SMR" id="B4EVM7"/>
<dbReference type="EnsemblBacteria" id="CAR42199">
    <property type="protein sequence ID" value="CAR42199"/>
    <property type="gene ID" value="PMI1003"/>
</dbReference>
<dbReference type="GeneID" id="6800293"/>
<dbReference type="KEGG" id="pmr:PMI1003"/>
<dbReference type="PATRIC" id="fig|529507.6.peg.968"/>
<dbReference type="eggNOG" id="COG1387">
    <property type="taxonomic scope" value="Bacteria"/>
</dbReference>
<dbReference type="HOGENOM" id="CLU_061999_0_1_6"/>
<dbReference type="Proteomes" id="UP000008319">
    <property type="component" value="Chromosome"/>
</dbReference>
<dbReference type="GO" id="GO:0005829">
    <property type="term" value="C:cytosol"/>
    <property type="evidence" value="ECO:0007669"/>
    <property type="project" value="TreeGrafter"/>
</dbReference>
<dbReference type="GO" id="GO:0016791">
    <property type="term" value="F:phosphatase activity"/>
    <property type="evidence" value="ECO:0007669"/>
    <property type="project" value="UniProtKB-UniRule"/>
</dbReference>
<dbReference type="GO" id="GO:0008270">
    <property type="term" value="F:zinc ion binding"/>
    <property type="evidence" value="ECO:0007669"/>
    <property type="project" value="UniProtKB-UniRule"/>
</dbReference>
<dbReference type="GO" id="GO:0071978">
    <property type="term" value="P:bacterial-type flagellum-dependent swarming motility"/>
    <property type="evidence" value="ECO:0007669"/>
    <property type="project" value="TreeGrafter"/>
</dbReference>
<dbReference type="CDD" id="cd07437">
    <property type="entry name" value="PHP_HisPPase_Ycdx_like"/>
    <property type="match status" value="1"/>
</dbReference>
<dbReference type="Gene3D" id="3.20.20.140">
    <property type="entry name" value="Metal-dependent hydrolases"/>
    <property type="match status" value="1"/>
</dbReference>
<dbReference type="HAMAP" id="MF_01561">
    <property type="entry name" value="YcdX_phosphat"/>
    <property type="match status" value="1"/>
</dbReference>
<dbReference type="InterPro" id="IPR023710">
    <property type="entry name" value="Phosphatase_YcdX_put"/>
</dbReference>
<dbReference type="InterPro" id="IPR004013">
    <property type="entry name" value="PHP_dom"/>
</dbReference>
<dbReference type="InterPro" id="IPR050243">
    <property type="entry name" value="PHP_phosphatase"/>
</dbReference>
<dbReference type="InterPro" id="IPR003141">
    <property type="entry name" value="Pol/His_phosphatase_N"/>
</dbReference>
<dbReference type="InterPro" id="IPR016195">
    <property type="entry name" value="Pol/histidinol_Pase-like"/>
</dbReference>
<dbReference type="NCBIfam" id="NF006702">
    <property type="entry name" value="PRK09248.1"/>
    <property type="match status" value="1"/>
</dbReference>
<dbReference type="PANTHER" id="PTHR36928">
    <property type="entry name" value="PHOSPHATASE YCDX-RELATED"/>
    <property type="match status" value="1"/>
</dbReference>
<dbReference type="PANTHER" id="PTHR36928:SF1">
    <property type="entry name" value="PHOSPHATASE YCDX-RELATED"/>
    <property type="match status" value="1"/>
</dbReference>
<dbReference type="Pfam" id="PF02811">
    <property type="entry name" value="PHP"/>
    <property type="match status" value="1"/>
</dbReference>
<dbReference type="SMART" id="SM00481">
    <property type="entry name" value="POLIIIAc"/>
    <property type="match status" value="1"/>
</dbReference>
<dbReference type="SUPFAM" id="SSF89550">
    <property type="entry name" value="PHP domain-like"/>
    <property type="match status" value="1"/>
</dbReference>
<keyword id="KW-0378">Hydrolase</keyword>
<keyword id="KW-0479">Metal-binding</keyword>
<keyword id="KW-1185">Reference proteome</keyword>
<keyword id="KW-0862">Zinc</keyword>
<sequence length="245" mass="26765">MYPVDLHAHTIASTHAYSTVSEYFQQAKKKGIKLFAITDHGPDMDDAPHEWHFSNLPVIPRMVDGVGILYGIEANIKNIKGEIDCTEKMSKKLDIVLAGFHDPVMGSLGMVDNTKALIATISSGLVQVITHPGNPKYPIDIKEVAKVAAEFNVALEMNNSSFIHSRVGSEKNCIEIAKAVLDAGGLIALGSDSHIASSLGNFERVLEVLAEIQFPQQKILNTSPRKVLDFLQAHGKKEITAFQHL</sequence>
<reference key="1">
    <citation type="journal article" date="2008" name="J. Bacteriol.">
        <title>Complete genome sequence of uropathogenic Proteus mirabilis, a master of both adherence and motility.</title>
        <authorList>
            <person name="Pearson M.M."/>
            <person name="Sebaihia M."/>
            <person name="Churcher C."/>
            <person name="Quail M.A."/>
            <person name="Seshasayee A.S."/>
            <person name="Luscombe N.M."/>
            <person name="Abdellah Z."/>
            <person name="Arrosmith C."/>
            <person name="Atkin B."/>
            <person name="Chillingworth T."/>
            <person name="Hauser H."/>
            <person name="Jagels K."/>
            <person name="Moule S."/>
            <person name="Mungall K."/>
            <person name="Norbertczak H."/>
            <person name="Rabbinowitsch E."/>
            <person name="Walker D."/>
            <person name="Whithead S."/>
            <person name="Thomson N.R."/>
            <person name="Rather P.N."/>
            <person name="Parkhill J."/>
            <person name="Mobley H.L.T."/>
        </authorList>
    </citation>
    <scope>NUCLEOTIDE SEQUENCE [LARGE SCALE GENOMIC DNA]</scope>
    <source>
        <strain>HI4320</strain>
    </source>
</reference>
<name>Y1003_PROMH</name>
<accession>B4EVM7</accession>
<organism>
    <name type="scientific">Proteus mirabilis (strain HI4320)</name>
    <dbReference type="NCBI Taxonomy" id="529507"/>
    <lineage>
        <taxon>Bacteria</taxon>
        <taxon>Pseudomonadati</taxon>
        <taxon>Pseudomonadota</taxon>
        <taxon>Gammaproteobacteria</taxon>
        <taxon>Enterobacterales</taxon>
        <taxon>Morganellaceae</taxon>
        <taxon>Proteus</taxon>
    </lineage>
</organism>
<proteinExistence type="inferred from homology"/>
<gene>
    <name type="ordered locus">PMI1003</name>
</gene>
<feature type="chain" id="PRO_1000147139" description="Probable phosphatase PMI1003">
    <location>
        <begin position="1"/>
        <end position="245"/>
    </location>
</feature>
<feature type="binding site" evidence="1">
    <location>
        <position position="7"/>
    </location>
    <ligand>
        <name>Zn(2+)</name>
        <dbReference type="ChEBI" id="CHEBI:29105"/>
        <label>1</label>
    </ligand>
</feature>
<feature type="binding site" evidence="1">
    <location>
        <position position="9"/>
    </location>
    <ligand>
        <name>Zn(2+)</name>
        <dbReference type="ChEBI" id="CHEBI:29105"/>
        <label>1</label>
    </ligand>
</feature>
<feature type="binding site" evidence="1">
    <location>
        <position position="15"/>
    </location>
    <ligand>
        <name>Zn(2+)</name>
        <dbReference type="ChEBI" id="CHEBI:29105"/>
        <label>2</label>
    </ligand>
</feature>
<feature type="binding site" evidence="1">
    <location>
        <position position="40"/>
    </location>
    <ligand>
        <name>Zn(2+)</name>
        <dbReference type="ChEBI" id="CHEBI:29105"/>
        <label>2</label>
    </ligand>
</feature>
<feature type="binding site" evidence="1">
    <location>
        <position position="73"/>
    </location>
    <ligand>
        <name>Zn(2+)</name>
        <dbReference type="ChEBI" id="CHEBI:29105"/>
        <label>1</label>
    </ligand>
</feature>
<feature type="binding site" evidence="1">
    <location>
        <position position="73"/>
    </location>
    <ligand>
        <name>Zn(2+)</name>
        <dbReference type="ChEBI" id="CHEBI:29105"/>
        <label>3</label>
    </ligand>
</feature>
<feature type="binding site" evidence="1">
    <location>
        <position position="101"/>
    </location>
    <ligand>
        <name>Zn(2+)</name>
        <dbReference type="ChEBI" id="CHEBI:29105"/>
        <label>3</label>
    </ligand>
</feature>
<feature type="binding site" evidence="1">
    <location>
        <position position="131"/>
    </location>
    <ligand>
        <name>Zn(2+)</name>
        <dbReference type="ChEBI" id="CHEBI:29105"/>
        <label>3</label>
    </ligand>
</feature>
<feature type="binding site" evidence="1">
    <location>
        <position position="192"/>
    </location>
    <ligand>
        <name>Zn(2+)</name>
        <dbReference type="ChEBI" id="CHEBI:29105"/>
        <label>1</label>
    </ligand>
</feature>
<feature type="binding site" evidence="1">
    <location>
        <position position="194"/>
    </location>
    <ligand>
        <name>Zn(2+)</name>
        <dbReference type="ChEBI" id="CHEBI:29105"/>
        <label>2</label>
    </ligand>
</feature>
<evidence type="ECO:0000255" key="1">
    <source>
        <dbReference type="HAMAP-Rule" id="MF_01561"/>
    </source>
</evidence>